<proteinExistence type="inferred from homology"/>
<accession>Q97ZI8</accession>
<organism>
    <name type="scientific">Saccharolobus solfataricus (strain ATCC 35092 / DSM 1617 / JCM 11322 / P2)</name>
    <name type="common">Sulfolobus solfataricus</name>
    <dbReference type="NCBI Taxonomy" id="273057"/>
    <lineage>
        <taxon>Archaea</taxon>
        <taxon>Thermoproteota</taxon>
        <taxon>Thermoprotei</taxon>
        <taxon>Sulfolobales</taxon>
        <taxon>Sulfolobaceae</taxon>
        <taxon>Saccharolobus</taxon>
    </lineage>
</organism>
<reference key="1">
    <citation type="journal article" date="2001" name="Proc. Natl. Acad. Sci. U.S.A.">
        <title>The complete genome of the crenarchaeon Sulfolobus solfataricus P2.</title>
        <authorList>
            <person name="She Q."/>
            <person name="Singh R.K."/>
            <person name="Confalonieri F."/>
            <person name="Zivanovic Y."/>
            <person name="Allard G."/>
            <person name="Awayez M.J."/>
            <person name="Chan-Weiher C.C.-Y."/>
            <person name="Clausen I.G."/>
            <person name="Curtis B.A."/>
            <person name="De Moors A."/>
            <person name="Erauso G."/>
            <person name="Fletcher C."/>
            <person name="Gordon P.M.K."/>
            <person name="Heikamp-de Jong I."/>
            <person name="Jeffries A.C."/>
            <person name="Kozera C.J."/>
            <person name="Medina N."/>
            <person name="Peng X."/>
            <person name="Thi-Ngoc H.P."/>
            <person name="Redder P."/>
            <person name="Schenk M.E."/>
            <person name="Theriault C."/>
            <person name="Tolstrup N."/>
            <person name="Charlebois R.L."/>
            <person name="Doolittle W.F."/>
            <person name="Duguet M."/>
            <person name="Gaasterland T."/>
            <person name="Garrett R.A."/>
            <person name="Ragan M.A."/>
            <person name="Sensen C.W."/>
            <person name="Van der Oost J."/>
        </authorList>
    </citation>
    <scope>NUCLEOTIDE SEQUENCE [LARGE SCALE GENOMIC DNA]</scope>
    <source>
        <strain>ATCC 35092 / DSM 1617 / JCM 11322 / P2</strain>
    </source>
</reference>
<protein>
    <recommendedName>
        <fullName evidence="1">Probable glycine dehydrogenase (decarboxylating) subunit 1</fullName>
        <ecNumber evidence="1">1.4.4.2</ecNumber>
    </recommendedName>
    <alternativeName>
        <fullName evidence="1">Glycine cleavage system P-protein subunit 1</fullName>
    </alternativeName>
    <alternativeName>
        <fullName evidence="1">Glycine decarboxylase subunit 1</fullName>
    </alternativeName>
    <alternativeName>
        <fullName evidence="1">Glycine dehydrogenase (aminomethyl-transferring) subunit 1</fullName>
    </alternativeName>
</protein>
<keyword id="KW-0560">Oxidoreductase</keyword>
<keyword id="KW-1185">Reference proteome</keyword>
<feature type="chain" id="PRO_0000166989" description="Probable glycine dehydrogenase (decarboxylating) subunit 1">
    <location>
        <begin position="1"/>
        <end position="455"/>
    </location>
</feature>
<sequence length="455" mass="51367">MYKHPWLPNLDLTDEMLKEIGVNSLDDLFNDIPAEIKINRLLKVAKDKPLSEYEIEKEIYEKVKKNVELEAPPFIGAGICPHYIPNAVKFIIGRSEFYTSYTPYQPEISQGILQALFEYQSLMAELLEMDVVNASMYDWGSALAEAVLMANRINGKKTVLVPENANPFHKEVMRTWIQGKGIKIEEVKYDKNSGEVDIEDLEKKSSSNDVSAIYVQQPNFFGIFESNIEHIIDVAKHKKALSIIGVNPLSLGLIKPPGSYEADIVVGDGQELGLPLNFGGPLMGIFAVRWDMGLVRQMPGRIVGITRDVNNNMGFTLILQTREQFIKREKATSNITTNEALLALANAVYLSLLGKEGIRELAEEIYFRSHYAAKRLTEIDNVIMPFTSDFFEEFVIKFPIEYNIINDKLKERKLQGGLKLSIHTSLFCVTEVHDKKSIDLLVSTIQEAIKSVETS</sequence>
<dbReference type="EC" id="1.4.4.2" evidence="1"/>
<dbReference type="EMBL" id="AE006641">
    <property type="protein sequence ID" value="AAK41200.1"/>
    <property type="molecule type" value="Genomic_DNA"/>
</dbReference>
<dbReference type="PIR" id="A99243">
    <property type="entry name" value="A99243"/>
</dbReference>
<dbReference type="RefSeq" id="WP_009992350.1">
    <property type="nucleotide sequence ID" value="NC_002754.1"/>
</dbReference>
<dbReference type="SMR" id="Q97ZI8"/>
<dbReference type="FunCoup" id="Q97ZI8">
    <property type="interactions" value="134"/>
</dbReference>
<dbReference type="STRING" id="273057.SSO0918"/>
<dbReference type="PaxDb" id="273057-SSO0918"/>
<dbReference type="EnsemblBacteria" id="AAK41200">
    <property type="protein sequence ID" value="AAK41200"/>
    <property type="gene ID" value="SSO0918"/>
</dbReference>
<dbReference type="GeneID" id="44129848"/>
<dbReference type="KEGG" id="sso:SSO0918"/>
<dbReference type="PATRIC" id="fig|273057.12.peg.919"/>
<dbReference type="eggNOG" id="arCOG00077">
    <property type="taxonomic scope" value="Archaea"/>
</dbReference>
<dbReference type="HOGENOM" id="CLU_004620_0_2_2"/>
<dbReference type="InParanoid" id="Q97ZI8"/>
<dbReference type="PhylomeDB" id="Q97ZI8"/>
<dbReference type="Proteomes" id="UP000001974">
    <property type="component" value="Chromosome"/>
</dbReference>
<dbReference type="GO" id="GO:0004375">
    <property type="term" value="F:glycine dehydrogenase (decarboxylating) activity"/>
    <property type="evidence" value="ECO:0007669"/>
    <property type="project" value="UniProtKB-EC"/>
</dbReference>
<dbReference type="GO" id="GO:0019464">
    <property type="term" value="P:glycine decarboxylation via glycine cleavage system"/>
    <property type="evidence" value="ECO:0007669"/>
    <property type="project" value="UniProtKB-UniRule"/>
</dbReference>
<dbReference type="GO" id="GO:0009116">
    <property type="term" value="P:nucleoside metabolic process"/>
    <property type="evidence" value="ECO:0007669"/>
    <property type="project" value="InterPro"/>
</dbReference>
<dbReference type="CDD" id="cd00613">
    <property type="entry name" value="GDC-P"/>
    <property type="match status" value="1"/>
</dbReference>
<dbReference type="Gene3D" id="3.90.1150.10">
    <property type="entry name" value="Aspartate Aminotransferase, domain 1"/>
    <property type="match status" value="1"/>
</dbReference>
<dbReference type="Gene3D" id="3.40.640.10">
    <property type="entry name" value="Type I PLP-dependent aspartate aminotransferase-like (Major domain)"/>
    <property type="match status" value="1"/>
</dbReference>
<dbReference type="HAMAP" id="MF_00712">
    <property type="entry name" value="GcvPA"/>
    <property type="match status" value="1"/>
</dbReference>
<dbReference type="InterPro" id="IPR023010">
    <property type="entry name" value="GcvPA"/>
</dbReference>
<dbReference type="InterPro" id="IPR049315">
    <property type="entry name" value="GDC-P_N"/>
</dbReference>
<dbReference type="InterPro" id="IPR020581">
    <property type="entry name" value="GDC_P"/>
</dbReference>
<dbReference type="InterPro" id="IPR015424">
    <property type="entry name" value="PyrdxlP-dep_Trfase"/>
</dbReference>
<dbReference type="InterPro" id="IPR015421">
    <property type="entry name" value="PyrdxlP-dep_Trfase_major"/>
</dbReference>
<dbReference type="InterPro" id="IPR015422">
    <property type="entry name" value="PyrdxlP-dep_Trfase_small"/>
</dbReference>
<dbReference type="NCBIfam" id="NF001696">
    <property type="entry name" value="PRK00451.1"/>
    <property type="match status" value="1"/>
</dbReference>
<dbReference type="PANTHER" id="PTHR42806">
    <property type="entry name" value="GLYCINE CLEAVAGE SYSTEM P-PROTEIN"/>
    <property type="match status" value="1"/>
</dbReference>
<dbReference type="PANTHER" id="PTHR42806:SF1">
    <property type="entry name" value="GLYCINE DEHYDROGENASE (DECARBOXYLATING)"/>
    <property type="match status" value="1"/>
</dbReference>
<dbReference type="Pfam" id="PF02347">
    <property type="entry name" value="GDC-P"/>
    <property type="match status" value="1"/>
</dbReference>
<dbReference type="PIRSF" id="PIRSF006815">
    <property type="entry name" value="GcvPA"/>
    <property type="match status" value="1"/>
</dbReference>
<dbReference type="SUPFAM" id="SSF53383">
    <property type="entry name" value="PLP-dependent transferases"/>
    <property type="match status" value="1"/>
</dbReference>
<name>GCSPA_SACS2</name>
<gene>
    <name evidence="1" type="primary">gcvPA</name>
    <name type="ordered locus">SSO0918</name>
</gene>
<evidence type="ECO:0000255" key="1">
    <source>
        <dbReference type="HAMAP-Rule" id="MF_00712"/>
    </source>
</evidence>
<comment type="function">
    <text evidence="1">The glycine cleavage system catalyzes the degradation of glycine. The P protein binds the alpha-amino group of glycine through its pyridoxal phosphate cofactor; CO(2) is released and the remaining methylamine moiety is then transferred to the lipoamide cofactor of the H protein.</text>
</comment>
<comment type="catalytic activity">
    <reaction evidence="1">
        <text>N(6)-[(R)-lipoyl]-L-lysyl-[glycine-cleavage complex H protein] + glycine + H(+) = N(6)-[(R)-S(8)-aminomethyldihydrolipoyl]-L-lysyl-[glycine-cleavage complex H protein] + CO2</text>
        <dbReference type="Rhea" id="RHEA:24304"/>
        <dbReference type="Rhea" id="RHEA-COMP:10494"/>
        <dbReference type="Rhea" id="RHEA-COMP:10495"/>
        <dbReference type="ChEBI" id="CHEBI:15378"/>
        <dbReference type="ChEBI" id="CHEBI:16526"/>
        <dbReference type="ChEBI" id="CHEBI:57305"/>
        <dbReference type="ChEBI" id="CHEBI:83099"/>
        <dbReference type="ChEBI" id="CHEBI:83143"/>
        <dbReference type="EC" id="1.4.4.2"/>
    </reaction>
</comment>
<comment type="subunit">
    <text evidence="1">The glycine cleavage system is composed of four proteins: P, T, L and H. In this organism, the P 'protein' is a heterodimer of two subunits.</text>
</comment>
<comment type="similarity">
    <text evidence="1">Belongs to the GcvP family. N-terminal subunit subfamily.</text>
</comment>